<accession>Q80X60</accession>
<reference key="1">
    <citation type="journal article" date="2004" name="Genome Res.">
        <title>The status, quality, and expansion of the NIH full-length cDNA project: the Mammalian Gene Collection (MGC).</title>
        <authorList>
            <consortium name="The MGC Project Team"/>
        </authorList>
    </citation>
    <scope>NUCLEOTIDE SEQUENCE [LARGE SCALE MRNA]</scope>
    <source>
        <tissue>Testis</tissue>
    </source>
</reference>
<protein>
    <recommendedName>
        <fullName>EF-hand calcium-binding domain-containing protein 3</fullName>
    </recommendedName>
</protein>
<evidence type="ECO:0000250" key="1">
    <source>
        <dbReference type="UniProtKB" id="Q66HC0"/>
    </source>
</evidence>
<evidence type="ECO:0000255" key="2">
    <source>
        <dbReference type="PROSITE-ProRule" id="PRU00448"/>
    </source>
</evidence>
<evidence type="ECO:0000256" key="3">
    <source>
        <dbReference type="SAM" id="MobiDB-lite"/>
    </source>
</evidence>
<proteinExistence type="evidence at transcript level"/>
<gene>
    <name type="primary">Efcab3</name>
</gene>
<keyword id="KW-0106">Calcium</keyword>
<keyword id="KW-0479">Metal-binding</keyword>
<keyword id="KW-0597">Phosphoprotein</keyword>
<keyword id="KW-1185">Reference proteome</keyword>
<keyword id="KW-0677">Repeat</keyword>
<sequence length="432" mass="49710">MAVSEIKATMKLKPLKAPVFHKRDKDLRGSFSDHLKHKESKLSPAQLEAFRNAYNFFTKDRTGCIDSHGLISTIAKLGMNLNTYDIYNELKCADLDRDGKINFSDFINVLTDKKLFLKAVVPEKKICLDLANNPGILLFEILSKFVETSSLHRKDIIELVSYFRKRFQESHSEIMWSSYGRRGLKSEICSPPRSSTAAFANSARISIMKERDLYKFLEALKRCNLRTDSPYSKIPVFPLFPDVDGTVMGKPFKDTQKIEMLRRKEPLTFFEDYFFNKRDWKTQAMNVKPLKSASGYSDDILAIDHLFKKKQHWTVTDAAAIKQHVKKATESYNLGIALDHRKEMLNLWKKIRGDLVGIESNNESFYNTFSTYTWSWNVCQELLSAKDLRLHDASMNKSSPSNSGLSSPSDFSESDPETGRKRKRKSSRGFRQ</sequence>
<feature type="chain" id="PRO_0000253548" description="EF-hand calcium-binding domain-containing protein 3">
    <location>
        <begin position="1"/>
        <end position="432"/>
    </location>
</feature>
<feature type="domain" description="EF-hand 1" evidence="2">
    <location>
        <begin position="45"/>
        <end position="80"/>
    </location>
</feature>
<feature type="domain" description="EF-hand 2" evidence="2">
    <location>
        <begin position="81"/>
        <end position="116"/>
    </location>
</feature>
<feature type="region of interest" description="Disordered" evidence="3">
    <location>
        <begin position="394"/>
        <end position="432"/>
    </location>
</feature>
<feature type="compositionally biased region" description="Low complexity" evidence="3">
    <location>
        <begin position="395"/>
        <end position="411"/>
    </location>
</feature>
<feature type="compositionally biased region" description="Basic residues" evidence="3">
    <location>
        <begin position="420"/>
        <end position="432"/>
    </location>
</feature>
<feature type="binding site" evidence="2">
    <location>
        <position position="94"/>
    </location>
    <ligand>
        <name>Ca(2+)</name>
        <dbReference type="ChEBI" id="CHEBI:29108"/>
    </ligand>
</feature>
<feature type="binding site" evidence="2">
    <location>
        <position position="96"/>
    </location>
    <ligand>
        <name>Ca(2+)</name>
        <dbReference type="ChEBI" id="CHEBI:29108"/>
    </ligand>
</feature>
<feature type="binding site" evidence="2">
    <location>
        <position position="98"/>
    </location>
    <ligand>
        <name>Ca(2+)</name>
        <dbReference type="ChEBI" id="CHEBI:29108"/>
    </ligand>
</feature>
<feature type="binding site" evidence="2">
    <location>
        <position position="100"/>
    </location>
    <ligand>
        <name>Ca(2+)</name>
        <dbReference type="ChEBI" id="CHEBI:29108"/>
    </ligand>
</feature>
<feature type="binding site" evidence="2">
    <location>
        <position position="105"/>
    </location>
    <ligand>
        <name>Ca(2+)</name>
        <dbReference type="ChEBI" id="CHEBI:29108"/>
    </ligand>
</feature>
<feature type="modified residue" description="Phosphotyrosine" evidence="1">
    <location>
        <position position="273"/>
    </location>
</feature>
<name>EFCB3_MOUSE</name>
<dbReference type="EMBL" id="BC050801">
    <property type="protein sequence ID" value="AAH50801.1"/>
    <property type="molecule type" value="mRNA"/>
</dbReference>
<dbReference type="CCDS" id="CCDS36355.1"/>
<dbReference type="RefSeq" id="NP_001074515.1">
    <property type="nucleotide sequence ID" value="NM_001081046.2"/>
</dbReference>
<dbReference type="RefSeq" id="XP_006534289.1">
    <property type="nucleotide sequence ID" value="XM_006534226.3"/>
</dbReference>
<dbReference type="SMR" id="Q80X60"/>
<dbReference type="FunCoup" id="Q80X60">
    <property type="interactions" value="2"/>
</dbReference>
<dbReference type="STRING" id="10090.ENSMUSP00000021029"/>
<dbReference type="iPTMnet" id="Q80X60"/>
<dbReference type="PhosphoSitePlus" id="Q80X60"/>
<dbReference type="PaxDb" id="10090-ENSMUSP00000021029"/>
<dbReference type="Antibodypedia" id="18612">
    <property type="antibodies" value="34 antibodies from 19 providers"/>
</dbReference>
<dbReference type="DNASU" id="70894"/>
<dbReference type="Ensembl" id="ENSMUST00000021029.6">
    <property type="protein sequence ID" value="ENSMUSP00000021029.6"/>
    <property type="gene ID" value="ENSMUSG00000020690.14"/>
</dbReference>
<dbReference type="GeneID" id="70894"/>
<dbReference type="KEGG" id="mmu:70894"/>
<dbReference type="UCSC" id="uc007lwz.1">
    <property type="organism name" value="mouse"/>
</dbReference>
<dbReference type="AGR" id="MGI:1918144"/>
<dbReference type="CTD" id="146779"/>
<dbReference type="MGI" id="MGI:1918144">
    <property type="gene designation" value="Efcab3"/>
</dbReference>
<dbReference type="VEuPathDB" id="HostDB:ENSMUSG00000020690"/>
<dbReference type="eggNOG" id="KOG0027">
    <property type="taxonomic scope" value="Eukaryota"/>
</dbReference>
<dbReference type="GeneTree" id="ENSGT00390000004027"/>
<dbReference type="HOGENOM" id="CLU_055753_0_0_1"/>
<dbReference type="InParanoid" id="Q80X60"/>
<dbReference type="OMA" id="INILELW"/>
<dbReference type="OrthoDB" id="77490at9989"/>
<dbReference type="PhylomeDB" id="Q80X60"/>
<dbReference type="TreeFam" id="TF328393"/>
<dbReference type="BioGRID-ORCS" id="70894">
    <property type="hits" value="1 hit in 77 CRISPR screens"/>
</dbReference>
<dbReference type="ChiTaRS" id="Efcab3">
    <property type="organism name" value="mouse"/>
</dbReference>
<dbReference type="PRO" id="PR:Q80X60"/>
<dbReference type="Proteomes" id="UP000000589">
    <property type="component" value="Chromosome 11"/>
</dbReference>
<dbReference type="RNAct" id="Q80X60">
    <property type="molecule type" value="protein"/>
</dbReference>
<dbReference type="Bgee" id="ENSMUSG00000020690">
    <property type="expression patterns" value="Expressed in spermatid and 30 other cell types or tissues"/>
</dbReference>
<dbReference type="ExpressionAtlas" id="Q80X60">
    <property type="expression patterns" value="baseline"/>
</dbReference>
<dbReference type="GO" id="GO:0005509">
    <property type="term" value="F:calcium ion binding"/>
    <property type="evidence" value="ECO:0007669"/>
    <property type="project" value="InterPro"/>
</dbReference>
<dbReference type="Gene3D" id="1.10.238.10">
    <property type="entry name" value="EF-hand"/>
    <property type="match status" value="1"/>
</dbReference>
<dbReference type="InterPro" id="IPR011992">
    <property type="entry name" value="EF-hand-dom_pair"/>
</dbReference>
<dbReference type="InterPro" id="IPR018247">
    <property type="entry name" value="EF_Hand_1_Ca_BS"/>
</dbReference>
<dbReference type="InterPro" id="IPR002048">
    <property type="entry name" value="EF_hand_dom"/>
</dbReference>
<dbReference type="PANTHER" id="PTHR22656">
    <property type="entry name" value="EF-HAND CALCIUM-BINDING DOMAIN-CONTAINING PROTEIN 13"/>
    <property type="match status" value="1"/>
</dbReference>
<dbReference type="PANTHER" id="PTHR22656:SF1">
    <property type="entry name" value="EF-HAND CALCIUM-BINDING DOMAIN-CONTAINING PROTEIN 13"/>
    <property type="match status" value="1"/>
</dbReference>
<dbReference type="Pfam" id="PF13833">
    <property type="entry name" value="EF-hand_8"/>
    <property type="match status" value="1"/>
</dbReference>
<dbReference type="SUPFAM" id="SSF47473">
    <property type="entry name" value="EF-hand"/>
    <property type="match status" value="1"/>
</dbReference>
<dbReference type="PROSITE" id="PS00018">
    <property type="entry name" value="EF_HAND_1"/>
    <property type="match status" value="1"/>
</dbReference>
<dbReference type="PROSITE" id="PS50222">
    <property type="entry name" value="EF_HAND_2"/>
    <property type="match status" value="2"/>
</dbReference>
<organism>
    <name type="scientific">Mus musculus</name>
    <name type="common">Mouse</name>
    <dbReference type="NCBI Taxonomy" id="10090"/>
    <lineage>
        <taxon>Eukaryota</taxon>
        <taxon>Metazoa</taxon>
        <taxon>Chordata</taxon>
        <taxon>Craniata</taxon>
        <taxon>Vertebrata</taxon>
        <taxon>Euteleostomi</taxon>
        <taxon>Mammalia</taxon>
        <taxon>Eutheria</taxon>
        <taxon>Euarchontoglires</taxon>
        <taxon>Glires</taxon>
        <taxon>Rodentia</taxon>
        <taxon>Myomorpha</taxon>
        <taxon>Muroidea</taxon>
        <taxon>Muridae</taxon>
        <taxon>Murinae</taxon>
        <taxon>Mus</taxon>
        <taxon>Mus</taxon>
    </lineage>
</organism>